<accession>Q8U4A7</accession>
<dbReference type="EMBL" id="AE009950">
    <property type="protein sequence ID" value="AAL80305.1"/>
    <property type="molecule type" value="Genomic_DNA"/>
</dbReference>
<dbReference type="RefSeq" id="WP_011011294.1">
    <property type="nucleotide sequence ID" value="NZ_CP023154.1"/>
</dbReference>
<dbReference type="PDB" id="2QAI">
    <property type="method" value="X-ray"/>
    <property type="resolution" value="2.40 A"/>
    <property type="chains" value="A/B=1-103"/>
</dbReference>
<dbReference type="PDBsum" id="2QAI"/>
<dbReference type="SMR" id="Q8U4A7"/>
<dbReference type="STRING" id="186497.PF0181"/>
<dbReference type="PaxDb" id="186497-PF0181"/>
<dbReference type="KEGG" id="pfu:PF0181"/>
<dbReference type="PATRIC" id="fig|186497.12.peg.188"/>
<dbReference type="eggNOG" id="arCOG04102">
    <property type="taxonomic scope" value="Archaea"/>
</dbReference>
<dbReference type="HOGENOM" id="CLU_135754_2_0_2"/>
<dbReference type="OrthoDB" id="24971at2157"/>
<dbReference type="PhylomeDB" id="Q8U4A7"/>
<dbReference type="EvolutionaryTrace" id="Q8U4A7"/>
<dbReference type="Proteomes" id="UP000001013">
    <property type="component" value="Chromosome"/>
</dbReference>
<dbReference type="GO" id="GO:0005886">
    <property type="term" value="C:plasma membrane"/>
    <property type="evidence" value="ECO:0007669"/>
    <property type="project" value="UniProtKB-SubCell"/>
</dbReference>
<dbReference type="GO" id="GO:0005524">
    <property type="term" value="F:ATP binding"/>
    <property type="evidence" value="ECO:0007669"/>
    <property type="project" value="UniProtKB-UniRule"/>
</dbReference>
<dbReference type="GO" id="GO:0046933">
    <property type="term" value="F:proton-transporting ATP synthase activity, rotational mechanism"/>
    <property type="evidence" value="ECO:0007669"/>
    <property type="project" value="UniProtKB-UniRule"/>
</dbReference>
<dbReference type="GO" id="GO:0046961">
    <property type="term" value="F:proton-transporting ATPase activity, rotational mechanism"/>
    <property type="evidence" value="ECO:0007669"/>
    <property type="project" value="InterPro"/>
</dbReference>
<dbReference type="GO" id="GO:0042777">
    <property type="term" value="P:proton motive force-driven plasma membrane ATP synthesis"/>
    <property type="evidence" value="ECO:0007669"/>
    <property type="project" value="UniProtKB-UniRule"/>
</dbReference>
<dbReference type="Gene3D" id="3.40.50.10580">
    <property type="entry name" value="ATPase, V1 complex, subunit F"/>
    <property type="match status" value="1"/>
</dbReference>
<dbReference type="HAMAP" id="MF_00312">
    <property type="entry name" value="ATP_synth_F_arch"/>
    <property type="match status" value="1"/>
</dbReference>
<dbReference type="InterPro" id="IPR008218">
    <property type="entry name" value="ATPase_V1-cplx_f_g_su"/>
</dbReference>
<dbReference type="InterPro" id="IPR022944">
    <property type="entry name" value="ATPase_V1-cplx_fsu_bac/arc"/>
</dbReference>
<dbReference type="InterPro" id="IPR036906">
    <property type="entry name" value="ATPase_V1_fsu_sf"/>
</dbReference>
<dbReference type="NCBIfam" id="NF003047">
    <property type="entry name" value="PRK03957.1"/>
    <property type="match status" value="1"/>
</dbReference>
<dbReference type="PANTHER" id="PTHR13861:SF2">
    <property type="entry name" value="V-TYPE PROTON ATPASE SUBUNIT F"/>
    <property type="match status" value="1"/>
</dbReference>
<dbReference type="PANTHER" id="PTHR13861">
    <property type="entry name" value="VACUOLAR ATP SYNTHASE SUBUNIT F"/>
    <property type="match status" value="1"/>
</dbReference>
<dbReference type="Pfam" id="PF01990">
    <property type="entry name" value="ATP-synt_F"/>
    <property type="match status" value="1"/>
</dbReference>
<dbReference type="SUPFAM" id="SSF159468">
    <property type="entry name" value="AtpF-like"/>
    <property type="match status" value="1"/>
</dbReference>
<feature type="chain" id="PRO_0000144822" description="A-type ATP synthase subunit F">
    <location>
        <begin position="1"/>
        <end position="103"/>
    </location>
</feature>
<feature type="strand" evidence="2">
    <location>
        <begin position="2"/>
        <end position="7"/>
    </location>
</feature>
<feature type="helix" evidence="2">
    <location>
        <begin position="9"/>
        <end position="18"/>
    </location>
</feature>
<feature type="strand" evidence="2">
    <location>
        <begin position="21"/>
        <end position="25"/>
    </location>
</feature>
<feature type="helix" evidence="2">
    <location>
        <begin position="30"/>
        <end position="44"/>
    </location>
</feature>
<feature type="strand" evidence="2">
    <location>
        <begin position="49"/>
        <end position="55"/>
    </location>
</feature>
<feature type="helix" evidence="2">
    <location>
        <begin position="56"/>
        <end position="62"/>
    </location>
</feature>
<feature type="strand" evidence="2">
    <location>
        <begin position="69"/>
        <end position="76"/>
    </location>
</feature>
<feature type="helix" evidence="2">
    <location>
        <begin position="89"/>
        <end position="96"/>
    </location>
</feature>
<sequence length="103" mass="11740">MKIVVMGDSDTVVGFRLAGVHEAYEYDESLESVERARNKLRELLERDDVGIILITERLAQRIGSLPEVKFPIILQIPDKFGSIYGEDILRDVVRRAIGVELKR</sequence>
<comment type="function">
    <text evidence="1">Component of the A-type ATP synthase that produces ATP from ADP in the presence of a proton gradient across the membrane.</text>
</comment>
<comment type="subunit">
    <text evidence="1">Has multiple subunits with at least A(3), B(3), C, D, E, F, H, I and proteolipid K(x).</text>
</comment>
<comment type="subcellular location">
    <subcellularLocation>
        <location evidence="1">Cell membrane</location>
        <topology evidence="1">Peripheral membrane protein</topology>
    </subcellularLocation>
</comment>
<comment type="similarity">
    <text evidence="1">Belongs to the V-ATPase F subunit family.</text>
</comment>
<reference key="1">
    <citation type="journal article" date="1999" name="Genetics">
        <title>Divergence of the hyperthermophilic archaea Pyrococcus furiosus and P. horikoshii inferred from complete genomic sequences.</title>
        <authorList>
            <person name="Maeder D.L."/>
            <person name="Weiss R.B."/>
            <person name="Dunn D.M."/>
            <person name="Cherry J.L."/>
            <person name="Gonzalez J.M."/>
            <person name="DiRuggiero J."/>
            <person name="Robb F.T."/>
        </authorList>
    </citation>
    <scope>NUCLEOTIDE SEQUENCE [LARGE SCALE GENOMIC DNA]</scope>
    <source>
        <strain>ATCC 43587 / DSM 3638 / JCM 8422 / Vc1</strain>
    </source>
</reference>
<proteinExistence type="evidence at protein level"/>
<name>AATF_PYRFU</name>
<keyword id="KW-0002">3D-structure</keyword>
<keyword id="KW-0066">ATP synthesis</keyword>
<keyword id="KW-1003">Cell membrane</keyword>
<keyword id="KW-0375">Hydrogen ion transport</keyword>
<keyword id="KW-0406">Ion transport</keyword>
<keyword id="KW-0472">Membrane</keyword>
<keyword id="KW-1185">Reference proteome</keyword>
<keyword id="KW-0813">Transport</keyword>
<protein>
    <recommendedName>
        <fullName evidence="1">A-type ATP synthase subunit F</fullName>
    </recommendedName>
</protein>
<organism>
    <name type="scientific">Pyrococcus furiosus (strain ATCC 43587 / DSM 3638 / JCM 8422 / Vc1)</name>
    <dbReference type="NCBI Taxonomy" id="186497"/>
    <lineage>
        <taxon>Archaea</taxon>
        <taxon>Methanobacteriati</taxon>
        <taxon>Methanobacteriota</taxon>
        <taxon>Thermococci</taxon>
        <taxon>Thermococcales</taxon>
        <taxon>Thermococcaceae</taxon>
        <taxon>Pyrococcus</taxon>
    </lineage>
</organism>
<evidence type="ECO:0000255" key="1">
    <source>
        <dbReference type="HAMAP-Rule" id="MF_00312"/>
    </source>
</evidence>
<evidence type="ECO:0007829" key="2">
    <source>
        <dbReference type="PDB" id="2QAI"/>
    </source>
</evidence>
<gene>
    <name evidence="1" type="primary">atpF</name>
    <name type="ordered locus">PF0181</name>
</gene>